<dbReference type="EC" id="7.1.1.-" evidence="1"/>
<dbReference type="EMBL" id="AM286415">
    <property type="protein sequence ID" value="CAL11434.1"/>
    <property type="molecule type" value="Genomic_DNA"/>
</dbReference>
<dbReference type="RefSeq" id="WP_011815938.1">
    <property type="nucleotide sequence ID" value="NC_008800.1"/>
</dbReference>
<dbReference type="RefSeq" id="YP_001005662.1">
    <property type="nucleotide sequence ID" value="NC_008800.1"/>
</dbReference>
<dbReference type="SMR" id="A1JLG6"/>
<dbReference type="KEGG" id="yen:YE1346"/>
<dbReference type="PATRIC" id="fig|393305.7.peg.1465"/>
<dbReference type="eggNOG" id="COG0649">
    <property type="taxonomic scope" value="Bacteria"/>
</dbReference>
<dbReference type="eggNOG" id="COG0852">
    <property type="taxonomic scope" value="Bacteria"/>
</dbReference>
<dbReference type="HOGENOM" id="CLU_015134_3_2_6"/>
<dbReference type="OrthoDB" id="9801496at2"/>
<dbReference type="Proteomes" id="UP000000642">
    <property type="component" value="Chromosome"/>
</dbReference>
<dbReference type="GO" id="GO:0030964">
    <property type="term" value="C:NADH dehydrogenase complex"/>
    <property type="evidence" value="ECO:0007669"/>
    <property type="project" value="InterPro"/>
</dbReference>
<dbReference type="GO" id="GO:0005886">
    <property type="term" value="C:plasma membrane"/>
    <property type="evidence" value="ECO:0007669"/>
    <property type="project" value="UniProtKB-SubCell"/>
</dbReference>
<dbReference type="GO" id="GO:0051287">
    <property type="term" value="F:NAD binding"/>
    <property type="evidence" value="ECO:0007669"/>
    <property type="project" value="InterPro"/>
</dbReference>
<dbReference type="GO" id="GO:0008137">
    <property type="term" value="F:NADH dehydrogenase (ubiquinone) activity"/>
    <property type="evidence" value="ECO:0007669"/>
    <property type="project" value="InterPro"/>
</dbReference>
<dbReference type="GO" id="GO:0050136">
    <property type="term" value="F:NADH:ubiquinone reductase (non-electrogenic) activity"/>
    <property type="evidence" value="ECO:0007669"/>
    <property type="project" value="UniProtKB-UniRule"/>
</dbReference>
<dbReference type="GO" id="GO:0048038">
    <property type="term" value="F:quinone binding"/>
    <property type="evidence" value="ECO:0007669"/>
    <property type="project" value="UniProtKB-KW"/>
</dbReference>
<dbReference type="FunFam" id="1.10.645.10:FF:000001">
    <property type="entry name" value="NADH-quinone oxidoreductase subunit C/D"/>
    <property type="match status" value="1"/>
</dbReference>
<dbReference type="FunFam" id="3.30.460.80:FF:000001">
    <property type="entry name" value="NADH-quinone oxidoreductase subunit C/D"/>
    <property type="match status" value="1"/>
</dbReference>
<dbReference type="Gene3D" id="1.10.645.10">
    <property type="entry name" value="Cytochrome-c3 Hydrogenase, chain B"/>
    <property type="match status" value="1"/>
</dbReference>
<dbReference type="Gene3D" id="3.30.460.80">
    <property type="entry name" value="NADH:ubiquinone oxidoreductase, 30kDa subunit"/>
    <property type="match status" value="1"/>
</dbReference>
<dbReference type="HAMAP" id="MF_01357">
    <property type="entry name" value="NDH1_NuoC"/>
    <property type="match status" value="1"/>
</dbReference>
<dbReference type="HAMAP" id="MF_01359">
    <property type="entry name" value="NDH1_NuoCD_1"/>
    <property type="match status" value="1"/>
</dbReference>
<dbReference type="HAMAP" id="MF_01358">
    <property type="entry name" value="NDH1_NuoD"/>
    <property type="match status" value="1"/>
</dbReference>
<dbReference type="InterPro" id="IPR010218">
    <property type="entry name" value="NADH_DH_suC"/>
</dbReference>
<dbReference type="InterPro" id="IPR023062">
    <property type="entry name" value="NADH_DH_suCD"/>
</dbReference>
<dbReference type="InterPro" id="IPR001135">
    <property type="entry name" value="NADH_Q_OxRdtase_suD"/>
</dbReference>
<dbReference type="InterPro" id="IPR037232">
    <property type="entry name" value="NADH_quin_OxRdtase_su_C/D-like"/>
</dbReference>
<dbReference type="InterPro" id="IPR001268">
    <property type="entry name" value="NADH_UbQ_OxRdtase_30kDa_su"/>
</dbReference>
<dbReference type="InterPro" id="IPR014029">
    <property type="entry name" value="NADH_UbQ_OxRdtase_49kDa_CS"/>
</dbReference>
<dbReference type="InterPro" id="IPR022885">
    <property type="entry name" value="NDH1_su_D/H"/>
</dbReference>
<dbReference type="InterPro" id="IPR029014">
    <property type="entry name" value="NiFe-Hase_large"/>
</dbReference>
<dbReference type="NCBIfam" id="TIGR01961">
    <property type="entry name" value="NuoC_fam"/>
    <property type="match status" value="1"/>
</dbReference>
<dbReference type="NCBIfam" id="TIGR01962">
    <property type="entry name" value="NuoD"/>
    <property type="match status" value="1"/>
</dbReference>
<dbReference type="NCBIfam" id="NF004739">
    <property type="entry name" value="PRK06075.1"/>
    <property type="match status" value="1"/>
</dbReference>
<dbReference type="NCBIfam" id="NF008728">
    <property type="entry name" value="PRK11742.1"/>
    <property type="match status" value="1"/>
</dbReference>
<dbReference type="PANTHER" id="PTHR11993:SF45">
    <property type="entry name" value="NADH-QUINONE OXIDOREDUCTASE SUBUNIT C_D"/>
    <property type="match status" value="1"/>
</dbReference>
<dbReference type="PANTHER" id="PTHR11993">
    <property type="entry name" value="NADH-UBIQUINONE OXIDOREDUCTASE 49 KDA SUBUNIT"/>
    <property type="match status" value="1"/>
</dbReference>
<dbReference type="Pfam" id="PF00329">
    <property type="entry name" value="Complex1_30kDa"/>
    <property type="match status" value="1"/>
</dbReference>
<dbReference type="Pfam" id="PF00346">
    <property type="entry name" value="Complex1_49kDa"/>
    <property type="match status" value="1"/>
</dbReference>
<dbReference type="SUPFAM" id="SSF56762">
    <property type="entry name" value="HydB/Nqo4-like"/>
    <property type="match status" value="1"/>
</dbReference>
<dbReference type="SUPFAM" id="SSF143243">
    <property type="entry name" value="Nqo5-like"/>
    <property type="match status" value="1"/>
</dbReference>
<dbReference type="PROSITE" id="PS00535">
    <property type="entry name" value="COMPLEX1_49K"/>
    <property type="match status" value="1"/>
</dbReference>
<accession>A1JLG6</accession>
<comment type="function">
    <text evidence="1">NDH-1 shuttles electrons from NADH, via FMN and iron-sulfur (Fe-S) centers, to quinones in the respiratory chain. The immediate electron acceptor for the enzyme in this species is believed to be ubiquinone. Couples the redox reaction to proton translocation (for every two electrons transferred, four hydrogen ions are translocated across the cytoplasmic membrane), and thus conserves the redox energy in a proton gradient.</text>
</comment>
<comment type="catalytic activity">
    <reaction evidence="1">
        <text>a quinone + NADH + 5 H(+)(in) = a quinol + NAD(+) + 4 H(+)(out)</text>
        <dbReference type="Rhea" id="RHEA:57888"/>
        <dbReference type="ChEBI" id="CHEBI:15378"/>
        <dbReference type="ChEBI" id="CHEBI:24646"/>
        <dbReference type="ChEBI" id="CHEBI:57540"/>
        <dbReference type="ChEBI" id="CHEBI:57945"/>
        <dbReference type="ChEBI" id="CHEBI:132124"/>
    </reaction>
</comment>
<comment type="subunit">
    <text evidence="1">NDH-1 is composed of 13 different subunits. Subunits NuoB, CD, E, F, and G constitute the peripheral sector of the complex.</text>
</comment>
<comment type="subcellular location">
    <subcellularLocation>
        <location evidence="1">Cell inner membrane</location>
        <topology evidence="1">Peripheral membrane protein</topology>
        <orientation evidence="1">Cytoplasmic side</orientation>
    </subcellularLocation>
</comment>
<comment type="similarity">
    <text evidence="1">In the N-terminal section; belongs to the complex I 30 kDa subunit family.</text>
</comment>
<comment type="similarity">
    <text evidence="1">In the C-terminal section; belongs to the complex I 49 kDa subunit family.</text>
</comment>
<proteinExistence type="inferred from homology"/>
<keyword id="KW-0997">Cell inner membrane</keyword>
<keyword id="KW-1003">Cell membrane</keyword>
<keyword id="KW-0472">Membrane</keyword>
<keyword id="KW-0511">Multifunctional enzyme</keyword>
<keyword id="KW-0520">NAD</keyword>
<keyword id="KW-0874">Quinone</keyword>
<keyword id="KW-1278">Translocase</keyword>
<keyword id="KW-0813">Transport</keyword>
<keyword id="KW-0830">Ubiquinone</keyword>
<feature type="chain" id="PRO_0000358704" description="NADH-quinone oxidoreductase subunit C/D">
    <location>
        <begin position="1"/>
        <end position="598"/>
    </location>
</feature>
<feature type="region of interest" description="NADH dehydrogenase I subunit C" evidence="1">
    <location>
        <begin position="1"/>
        <end position="189"/>
    </location>
</feature>
<feature type="region of interest" description="NADH dehydrogenase I subunit D" evidence="1">
    <location>
        <begin position="213"/>
        <end position="598"/>
    </location>
</feature>
<name>NUOCD_YERE8</name>
<gene>
    <name evidence="1" type="primary">nuoC</name>
    <name evidence="1" type="synonym">nuoCD</name>
    <name evidence="1" type="synonym">nuoD</name>
    <name type="ordered locus">YE1346</name>
</gene>
<protein>
    <recommendedName>
        <fullName evidence="1">NADH-quinone oxidoreductase subunit C/D</fullName>
        <ecNumber evidence="1">7.1.1.-</ecNumber>
    </recommendedName>
    <alternativeName>
        <fullName evidence="1">NADH dehydrogenase I subunit C/D</fullName>
    </alternativeName>
    <alternativeName>
        <fullName evidence="1">NDH-1 subunit C/D</fullName>
    </alternativeName>
</protein>
<evidence type="ECO:0000255" key="1">
    <source>
        <dbReference type="HAMAP-Rule" id="MF_01359"/>
    </source>
</evidence>
<reference key="1">
    <citation type="journal article" date="2006" name="PLoS Genet.">
        <title>The complete genome sequence and comparative genome analysis of the high pathogenicity Yersinia enterocolitica strain 8081.</title>
        <authorList>
            <person name="Thomson N.R."/>
            <person name="Howard S."/>
            <person name="Wren B.W."/>
            <person name="Holden M.T.G."/>
            <person name="Crossman L."/>
            <person name="Challis G.L."/>
            <person name="Churcher C."/>
            <person name="Mungall K."/>
            <person name="Brooks K."/>
            <person name="Chillingworth T."/>
            <person name="Feltwell T."/>
            <person name="Abdellah Z."/>
            <person name="Hauser H."/>
            <person name="Jagels K."/>
            <person name="Maddison M."/>
            <person name="Moule S."/>
            <person name="Sanders M."/>
            <person name="Whitehead S."/>
            <person name="Quail M.A."/>
            <person name="Dougan G."/>
            <person name="Parkhill J."/>
            <person name="Prentice M.B."/>
        </authorList>
    </citation>
    <scope>NUCLEOTIDE SEQUENCE [LARGE SCALE GENOMIC DNA]</scope>
    <source>
        <strain>NCTC 13174 / 8081</strain>
    </source>
</reference>
<organism>
    <name type="scientific">Yersinia enterocolitica serotype O:8 / biotype 1B (strain NCTC 13174 / 8081)</name>
    <dbReference type="NCBI Taxonomy" id="393305"/>
    <lineage>
        <taxon>Bacteria</taxon>
        <taxon>Pseudomonadati</taxon>
        <taxon>Pseudomonadota</taxon>
        <taxon>Gammaproteobacteria</taxon>
        <taxon>Enterobacterales</taxon>
        <taxon>Yersiniaceae</taxon>
        <taxon>Yersinia</taxon>
    </lineage>
</organism>
<sequence length="598" mass="68886">MTDLTTSDSTQPAWQTRDHLDDPVIGELSNRFGPEAFVVQATRTGMPVVWVKREQLLEVMTFLRKQPKPYVMLFDLHGVDERLRTHRQGLPAADFSVFYHLLSIERNRDIMLKVALSEKDLHVSTATKIFPNANWYERETWEMFGITFDGHPHLTRIMMPQTWEGHPLRKDYPARATEFDPFVLTKQKEDLEMESLTFKPEDWGMKRGTENEDFMFLNLGPNHPSSHGAFRIVLQLDGEEIVDCVPDVGYHHRGAEKMGERQSWHSYIPYTDRIEYLGGCVNEMPYVLAVEKLAGIEVPDRVKTIRVMLSELFRINSHLLYISTFIQDVGAMTPVFFAFTDRQKVYDLVEAITGFRMHPAWFRIGGVAHDLPRGWERLLRDFLDWMPKRLDSYVKAALQNSILKGRSIGVAAYNAKEALEWGVTGAGLRATGVEFDVRKWRPYSGYENFDFEVPVGNNGDCYDRVMLKVEELRQSLRILEQCYKNMPEGPFKADHPLTTPPPKERTLQHIETLITHFLQVSWGPVMPANESFQMVEATKGINSYYLTSDASTMSYRTRIRTPSYAHLQQIPSVIRGSLVSDLIVYLGSIDFVMSDVDR</sequence>